<feature type="chain" id="PRO_1000121232" description="DNA-directed RNA polymerase subunit omega">
    <location>
        <begin position="1"/>
        <end position="74"/>
    </location>
</feature>
<accession>B6JM09</accession>
<gene>
    <name evidence="1" type="primary">rpoZ</name>
    <name type="ordered locus">HPP12_0785</name>
</gene>
<sequence length="74" mass="8502">MKKERTESLVAQALKNIGNDRYKLDNLVFARVKQLNAGAKTLVNMDPKRHKLVDIAIREIAEGKIDIDRIDERN</sequence>
<evidence type="ECO:0000255" key="1">
    <source>
        <dbReference type="HAMAP-Rule" id="MF_00366"/>
    </source>
</evidence>
<name>RPOZ_HELP2</name>
<proteinExistence type="inferred from homology"/>
<keyword id="KW-0240">DNA-directed RNA polymerase</keyword>
<keyword id="KW-0548">Nucleotidyltransferase</keyword>
<keyword id="KW-0804">Transcription</keyword>
<keyword id="KW-0808">Transferase</keyword>
<protein>
    <recommendedName>
        <fullName evidence="1">DNA-directed RNA polymerase subunit omega</fullName>
        <shortName evidence="1">RNAP omega subunit</shortName>
        <ecNumber evidence="1">2.7.7.6</ecNumber>
    </recommendedName>
    <alternativeName>
        <fullName evidence="1">RNA polymerase omega subunit</fullName>
    </alternativeName>
    <alternativeName>
        <fullName evidence="1">Transcriptase subunit omega</fullName>
    </alternativeName>
</protein>
<comment type="function">
    <text evidence="1">Promotes RNA polymerase assembly. Latches the N- and C-terminal regions of the beta' subunit thereby facilitating its interaction with the beta and alpha subunits.</text>
</comment>
<comment type="catalytic activity">
    <reaction evidence="1">
        <text>RNA(n) + a ribonucleoside 5'-triphosphate = RNA(n+1) + diphosphate</text>
        <dbReference type="Rhea" id="RHEA:21248"/>
        <dbReference type="Rhea" id="RHEA-COMP:14527"/>
        <dbReference type="Rhea" id="RHEA-COMP:17342"/>
        <dbReference type="ChEBI" id="CHEBI:33019"/>
        <dbReference type="ChEBI" id="CHEBI:61557"/>
        <dbReference type="ChEBI" id="CHEBI:140395"/>
        <dbReference type="EC" id="2.7.7.6"/>
    </reaction>
</comment>
<comment type="subunit">
    <text evidence="1">The RNAP catalytic core consists of 2 alpha, 1 beta, 1 beta' and 1 omega subunit. When a sigma factor is associated with the core the holoenzyme is formed, which can initiate transcription.</text>
</comment>
<comment type="similarity">
    <text evidence="1">Belongs to the RNA polymerase subunit omega family.</text>
</comment>
<dbReference type="EC" id="2.7.7.6" evidence="1"/>
<dbReference type="EMBL" id="CP001217">
    <property type="protein sequence ID" value="ACJ07937.1"/>
    <property type="molecule type" value="Genomic_DNA"/>
</dbReference>
<dbReference type="SMR" id="B6JM09"/>
<dbReference type="KEGG" id="hpp:HPP12_0785"/>
<dbReference type="HOGENOM" id="CLU_125406_3_0_7"/>
<dbReference type="Proteomes" id="UP000008198">
    <property type="component" value="Chromosome"/>
</dbReference>
<dbReference type="GO" id="GO:0000428">
    <property type="term" value="C:DNA-directed RNA polymerase complex"/>
    <property type="evidence" value="ECO:0007669"/>
    <property type="project" value="UniProtKB-KW"/>
</dbReference>
<dbReference type="GO" id="GO:0003677">
    <property type="term" value="F:DNA binding"/>
    <property type="evidence" value="ECO:0007669"/>
    <property type="project" value="UniProtKB-UniRule"/>
</dbReference>
<dbReference type="GO" id="GO:0003899">
    <property type="term" value="F:DNA-directed RNA polymerase activity"/>
    <property type="evidence" value="ECO:0007669"/>
    <property type="project" value="UniProtKB-UniRule"/>
</dbReference>
<dbReference type="GO" id="GO:0006351">
    <property type="term" value="P:DNA-templated transcription"/>
    <property type="evidence" value="ECO:0007669"/>
    <property type="project" value="UniProtKB-UniRule"/>
</dbReference>
<dbReference type="Gene3D" id="3.90.940.10">
    <property type="match status" value="1"/>
</dbReference>
<dbReference type="HAMAP" id="MF_00366">
    <property type="entry name" value="RNApol_bact_RpoZ"/>
    <property type="match status" value="1"/>
</dbReference>
<dbReference type="InterPro" id="IPR003716">
    <property type="entry name" value="DNA-dir_RNA_pol_omega"/>
</dbReference>
<dbReference type="InterPro" id="IPR006110">
    <property type="entry name" value="Pol_omega/Rpo6/RPB6"/>
</dbReference>
<dbReference type="InterPro" id="IPR036161">
    <property type="entry name" value="RPB6/omega-like_sf"/>
</dbReference>
<dbReference type="NCBIfam" id="NF001579">
    <property type="entry name" value="PRK00392.6-2"/>
    <property type="match status" value="1"/>
</dbReference>
<dbReference type="NCBIfam" id="TIGR00690">
    <property type="entry name" value="rpoZ"/>
    <property type="match status" value="1"/>
</dbReference>
<dbReference type="Pfam" id="PF01192">
    <property type="entry name" value="RNA_pol_Rpb6"/>
    <property type="match status" value="1"/>
</dbReference>
<dbReference type="SMART" id="SM01409">
    <property type="entry name" value="RNA_pol_Rpb6"/>
    <property type="match status" value="1"/>
</dbReference>
<dbReference type="SUPFAM" id="SSF63562">
    <property type="entry name" value="RPB6/omega subunit-like"/>
    <property type="match status" value="1"/>
</dbReference>
<reference key="1">
    <citation type="submission" date="2008-10" db="EMBL/GenBank/DDBJ databases">
        <title>The complete genome sequence of Helicobacter pylori strain P12.</title>
        <authorList>
            <person name="Fischer W."/>
            <person name="Windhager L."/>
            <person name="Karnholz A."/>
            <person name="Zeiller M."/>
            <person name="Zimmer R."/>
            <person name="Haas R."/>
        </authorList>
    </citation>
    <scope>NUCLEOTIDE SEQUENCE [LARGE SCALE GENOMIC DNA]</scope>
    <source>
        <strain>P12</strain>
    </source>
</reference>
<organism>
    <name type="scientific">Helicobacter pylori (strain P12)</name>
    <dbReference type="NCBI Taxonomy" id="570508"/>
    <lineage>
        <taxon>Bacteria</taxon>
        <taxon>Pseudomonadati</taxon>
        <taxon>Campylobacterota</taxon>
        <taxon>Epsilonproteobacteria</taxon>
        <taxon>Campylobacterales</taxon>
        <taxon>Helicobacteraceae</taxon>
        <taxon>Helicobacter</taxon>
    </lineage>
</organism>